<reference key="1">
    <citation type="journal article" date="2007" name="PLoS ONE">
        <title>A glimpse of streptococcal toxic shock syndrome from comparative genomics of S. suis 2 Chinese isolates.</title>
        <authorList>
            <person name="Chen C."/>
            <person name="Tang J."/>
            <person name="Dong W."/>
            <person name="Wang C."/>
            <person name="Feng Y."/>
            <person name="Wang J."/>
            <person name="Zheng F."/>
            <person name="Pan X."/>
            <person name="Liu D."/>
            <person name="Li M."/>
            <person name="Song Y."/>
            <person name="Zhu X."/>
            <person name="Sun H."/>
            <person name="Feng T."/>
            <person name="Guo Z."/>
            <person name="Ju A."/>
            <person name="Ge J."/>
            <person name="Dong Y."/>
            <person name="Sun W."/>
            <person name="Jiang Y."/>
            <person name="Wang J."/>
            <person name="Yan J."/>
            <person name="Yang H."/>
            <person name="Wang X."/>
            <person name="Gao G.F."/>
            <person name="Yang R."/>
            <person name="Wang J."/>
            <person name="Yu J."/>
        </authorList>
    </citation>
    <scope>NUCLEOTIDE SEQUENCE [LARGE SCALE GENOMIC DNA]</scope>
    <source>
        <strain>05ZYH33</strain>
    </source>
</reference>
<name>Y1549_STRSY</name>
<protein>
    <recommendedName>
        <fullName evidence="1">UPF0298 protein SSU05_1549</fullName>
    </recommendedName>
</protein>
<sequence length="90" mass="10815">MFEKKNRTCLTVYLHYNRDARKLSQYGDIVYHSKRLQYVLVYMDQELVKATILKLKKERFVKKVVPSYIKELDQNFVGNLWRDEEPSVVG</sequence>
<comment type="subcellular location">
    <subcellularLocation>
        <location evidence="1">Cytoplasm</location>
    </subcellularLocation>
</comment>
<comment type="similarity">
    <text evidence="1">Belongs to the UPF0298 family.</text>
</comment>
<organism>
    <name type="scientific">Streptococcus suis (strain 05ZYH33)</name>
    <dbReference type="NCBI Taxonomy" id="391295"/>
    <lineage>
        <taxon>Bacteria</taxon>
        <taxon>Bacillati</taxon>
        <taxon>Bacillota</taxon>
        <taxon>Bacilli</taxon>
        <taxon>Lactobacillales</taxon>
        <taxon>Streptococcaceae</taxon>
        <taxon>Streptococcus</taxon>
    </lineage>
</organism>
<accession>A4VWM6</accession>
<evidence type="ECO:0000255" key="1">
    <source>
        <dbReference type="HAMAP-Rule" id="MF_01126"/>
    </source>
</evidence>
<dbReference type="EMBL" id="CP000407">
    <property type="protein sequence ID" value="ABP90515.1"/>
    <property type="molecule type" value="Genomic_DNA"/>
</dbReference>
<dbReference type="SMR" id="A4VWM6"/>
<dbReference type="STRING" id="391295.SSU05_1549"/>
<dbReference type="KEGG" id="ssu:SSU05_1549"/>
<dbReference type="eggNOG" id="COG4471">
    <property type="taxonomic scope" value="Bacteria"/>
</dbReference>
<dbReference type="HOGENOM" id="CLU_159890_1_0_9"/>
<dbReference type="BioCyc" id="SSUI391295:GHI8-1603-MONOMER"/>
<dbReference type="GO" id="GO:0005737">
    <property type="term" value="C:cytoplasm"/>
    <property type="evidence" value="ECO:0007669"/>
    <property type="project" value="UniProtKB-SubCell"/>
</dbReference>
<dbReference type="HAMAP" id="MF_01126">
    <property type="entry name" value="UPF0298"/>
    <property type="match status" value="1"/>
</dbReference>
<dbReference type="InterPro" id="IPR016979">
    <property type="entry name" value="DUF2129"/>
</dbReference>
<dbReference type="NCBIfam" id="NF002631">
    <property type="entry name" value="PRK02302.1"/>
    <property type="match status" value="1"/>
</dbReference>
<dbReference type="Pfam" id="PF09902">
    <property type="entry name" value="DUF2129"/>
    <property type="match status" value="1"/>
</dbReference>
<dbReference type="PIRSF" id="PIRSF031653">
    <property type="entry name" value="UCP031653"/>
    <property type="match status" value="1"/>
</dbReference>
<gene>
    <name type="ordered locus">SSU05_1549</name>
</gene>
<proteinExistence type="inferred from homology"/>
<feature type="chain" id="PRO_1000065375" description="UPF0298 protein SSU05_1549">
    <location>
        <begin position="1"/>
        <end position="90"/>
    </location>
</feature>
<keyword id="KW-0963">Cytoplasm</keyword>